<protein>
    <recommendedName>
        <fullName evidence="4">Type II methyltransferase M.FokI</fullName>
        <shortName evidence="5 6">M.FokI</shortName>
        <ecNumber evidence="8 9">2.1.1.72</ecNumber>
    </recommendedName>
    <alternativeName>
        <fullName>Adenine-specific methyltransferase FokI</fullName>
    </alternativeName>
    <alternativeName>
        <fullName>Modification methylase FokI</fullName>
    </alternativeName>
</protein>
<accession>P14871</accession>
<accession>Q47911</accession>
<reference key="1">
    <citation type="journal article" date="1989" name="J. Biol. Chem.">
        <title>The fokI restriction-modification system. I. Organization and nucleotide sequences of the restriction and modification genes.</title>
        <authorList>
            <person name="Kita K."/>
            <person name="Kotani H."/>
            <person name="Sugisaki H."/>
            <person name="Takanami M."/>
        </authorList>
    </citation>
    <scope>NUCLEOTIDE SEQUENCE [GENOMIC DNA]</scope>
    <scope>PROTEIN SEQUENCE OF 1-9</scope>
    <scope>SUBUNIT</scope>
    <scope>MOTIF</scope>
    <source>
        <strain>ATCC 33414 / DSM 15489 / NBRC 12536 / NCIMB 561 / CIP 105082 / LMG 4030 / VKM B-1175</strain>
    </source>
</reference>
<reference key="2">
    <citation type="journal article" date="1989" name="Gene">
        <title>Nucleotide sequence of the FokI restriction-modification system: separate strand-specificity domains in the methyltransferase.</title>
        <authorList>
            <person name="Looney M.C."/>
            <person name="Moran L.S."/>
            <person name="Jack W.E."/>
            <person name="Feehery G.R."/>
            <person name="Benner J.S."/>
            <person name="Slatko B.E."/>
            <person name="Wilson G.G."/>
        </authorList>
    </citation>
    <scope>NUCLEOTIDE SEQUENCE [GENOMIC DNA]</scope>
    <scope>PROTEIN SEQUENCE OF 1-24</scope>
    <scope>FUNCTION</scope>
    <scope>DOMAIN</scope>
    <scope>MOTIF</scope>
</reference>
<reference key="3">
    <citation type="journal article" date="1989" name="J. Biol. Chem.">
        <title>The FokI restriction-modification system. II. Presence of two domains in FokI methylase responsible for modification of different DNA strands.</title>
        <authorList>
            <person name="Sugisaki H."/>
            <person name="Kita K."/>
            <person name="Takanami M."/>
        </authorList>
    </citation>
    <scope>FUNCTION</scope>
    <scope>DOMAIN</scope>
    <scope>MOTIF</scope>
    <scope>MUTAGENESIS OF ASP-218 AND ASP-548</scope>
</reference>
<reference key="4">
    <citation type="journal article" date="2003" name="Nucleic Acids Res.">
        <title>A nomenclature for restriction enzymes, DNA methyltransferases, homing endonucleases and their genes.</title>
        <authorList>
            <person name="Roberts R.J."/>
            <person name="Belfort M."/>
            <person name="Bestor T."/>
            <person name="Bhagwat A.S."/>
            <person name="Bickle T.A."/>
            <person name="Bitinaite J."/>
            <person name="Blumenthal R.M."/>
            <person name="Degtyarev S.K."/>
            <person name="Dryden D.T."/>
            <person name="Dybvig K."/>
            <person name="Firman K."/>
            <person name="Gromova E.S."/>
            <person name="Gumport R.I."/>
            <person name="Halford S.E."/>
            <person name="Hattman S."/>
            <person name="Heitman J."/>
            <person name="Hornby D.P."/>
            <person name="Janulaitis A."/>
            <person name="Jeltsch A."/>
            <person name="Josephsen J."/>
            <person name="Kiss A."/>
            <person name="Klaenhammer T.R."/>
            <person name="Kobayashi I."/>
            <person name="Kong H."/>
            <person name="Krueger D.H."/>
            <person name="Lacks S."/>
            <person name="Marinus M.G."/>
            <person name="Miyahara M."/>
            <person name="Morgan R.D."/>
            <person name="Murray N.E."/>
            <person name="Nagaraja V."/>
            <person name="Piekarowicz A."/>
            <person name="Pingoud A."/>
            <person name="Raleigh E."/>
            <person name="Rao D.N."/>
            <person name="Reich N."/>
            <person name="Repin V.E."/>
            <person name="Selker E.U."/>
            <person name="Shaw P.C."/>
            <person name="Stein D.C."/>
            <person name="Stoddard B.L."/>
            <person name="Szybalski W."/>
            <person name="Trautner T.A."/>
            <person name="Van Etten J.L."/>
            <person name="Vitor J.M."/>
            <person name="Wilson G.G."/>
            <person name="Xu S.Y."/>
        </authorList>
    </citation>
    <scope>NOMENCLATURE</scope>
    <scope>SUBTYPE</scope>
</reference>
<organism>
    <name type="scientific">Planomicrobium okeanokoites</name>
    <name type="common">Planococcus okeanokoites</name>
    <name type="synonym">Flavobacterium okeanokoites</name>
    <dbReference type="NCBI Taxonomy" id="244"/>
    <lineage>
        <taxon>Bacteria</taxon>
        <taxon>Bacillati</taxon>
        <taxon>Bacillota</taxon>
        <taxon>Bacilli</taxon>
        <taxon>Bacillales</taxon>
        <taxon>Caryophanaceae</taxon>
        <taxon>Planomicrobium</taxon>
    </lineage>
</organism>
<keyword id="KW-0903">Direct protein sequencing</keyword>
<keyword id="KW-0238">DNA-binding</keyword>
<keyword id="KW-0489">Methyltransferase</keyword>
<keyword id="KW-0677">Repeat</keyword>
<keyword id="KW-0680">Restriction system</keyword>
<keyword id="KW-0949">S-adenosyl-L-methionine</keyword>
<keyword id="KW-0808">Transferase</keyword>
<sequence>MRFIGSKVNLLDNIQEVIEENVKDDAHVFMDLFSGTGIVGENFKKDYQVLSNDSLYFSYILLKAKIENNSIPNFSELKKIGIKEPLHYLENEEFEISHEFFLTHNYSPYMGCERMYFTVENASRIDFIRLTLNRWKNESLINELEFAYLLAILIEAVPFISNISGTYGAYLKHWDKRALGKLKLRTLDIGNNHYANKTYNEDANSLIEKVYGDILYIDPPYNGRQYISNYHLLETIALYDYPEIYGKTGLRPYVESKSLYCQKKEVGNAFNHLIEKANFRHILVSYSSEGLLLEEEIESILKSHGLPETYRIYKMPYRKYKSKHKQEASELHEYIFYIQKDIALTNSVKSNKKIEVGKHKTNSYIKSPLNYVGGKHKLLNQIVPLFPDKIDTFVDLFSGGFNVGINVNANKIIATDINTYVVEVLDTMKKTSVEEVIAHIERRIEEYGLSKSNEEGFKAFRNYYNKTKKPLDLYTLICYSFNYQFRFNNNQEYNNPFGRERSQFSPALKKKLVLFIEALHEKNVQFVCSEFEHFNFSQLDQNDLVYCDPPYLITTGSYNDGNRGFKDWNRLQEIKLLDILDHLNSKGVYFALSNVLSHKGLENELLLEWSKKYNIHHLQHSYSNSSHNTTRGESQEVLITNYTNYTK</sequence>
<evidence type="ECO:0000269" key="1">
    <source>
    </source>
</evidence>
<evidence type="ECO:0000269" key="2">
    <source>
    </source>
</evidence>
<evidence type="ECO:0000269" key="3">
    <source>
    </source>
</evidence>
<evidence type="ECO:0000303" key="4">
    <source>
    </source>
</evidence>
<evidence type="ECO:0000303" key="5">
    <source>
    </source>
</evidence>
<evidence type="ECO:0000303" key="6">
    <source>
    </source>
</evidence>
<evidence type="ECO:0000305" key="7"/>
<evidence type="ECO:0000305" key="8">
    <source>
    </source>
</evidence>
<evidence type="ECO:0000305" key="9">
    <source>
    </source>
</evidence>
<evidence type="ECO:0000305" key="10">
    <source>
    </source>
</evidence>
<proteinExistence type="evidence at protein level"/>
<dbReference type="EC" id="2.1.1.72" evidence="8 9"/>
<dbReference type="EMBL" id="J04623">
    <property type="protein sequence ID" value="AAA24926.1"/>
    <property type="molecule type" value="Genomic_DNA"/>
</dbReference>
<dbReference type="EMBL" id="M28828">
    <property type="protein sequence ID" value="AAA24933.1"/>
    <property type="molecule type" value="Genomic_DNA"/>
</dbReference>
<dbReference type="PIR" id="JQ0033">
    <property type="entry name" value="JQ0033"/>
</dbReference>
<dbReference type="SMR" id="P14871"/>
<dbReference type="REBASE" id="3405">
    <property type="entry name" value="M.FokI"/>
</dbReference>
<dbReference type="PRO" id="PR:P14871"/>
<dbReference type="GO" id="GO:1904047">
    <property type="term" value="F:S-adenosyl-L-methionine binding"/>
    <property type="evidence" value="ECO:0007669"/>
    <property type="project" value="TreeGrafter"/>
</dbReference>
<dbReference type="GO" id="GO:0043565">
    <property type="term" value="F:sequence-specific DNA binding"/>
    <property type="evidence" value="ECO:0007669"/>
    <property type="project" value="TreeGrafter"/>
</dbReference>
<dbReference type="GO" id="GO:0009007">
    <property type="term" value="F:site-specific DNA-methyltransferase (adenine-specific) activity"/>
    <property type="evidence" value="ECO:0007669"/>
    <property type="project" value="UniProtKB-EC"/>
</dbReference>
<dbReference type="GO" id="GO:0009307">
    <property type="term" value="P:DNA restriction-modification system"/>
    <property type="evidence" value="ECO:0007669"/>
    <property type="project" value="UniProtKB-KW"/>
</dbReference>
<dbReference type="GO" id="GO:0032259">
    <property type="term" value="P:methylation"/>
    <property type="evidence" value="ECO:0007669"/>
    <property type="project" value="UniProtKB-KW"/>
</dbReference>
<dbReference type="GO" id="GO:0006298">
    <property type="term" value="P:mismatch repair"/>
    <property type="evidence" value="ECO:0007669"/>
    <property type="project" value="TreeGrafter"/>
</dbReference>
<dbReference type="Gene3D" id="1.10.1020.10">
    <property type="entry name" value="Adenine-specific Methyltransferase, Domain 2"/>
    <property type="match status" value="1"/>
</dbReference>
<dbReference type="Gene3D" id="3.40.50.150">
    <property type="entry name" value="Vaccinia Virus protein VP39"/>
    <property type="match status" value="1"/>
</dbReference>
<dbReference type="InterPro" id="IPR012186">
    <property type="entry name" value="Ade-mod_methylase_MStsI"/>
</dbReference>
<dbReference type="InterPro" id="IPR023095">
    <property type="entry name" value="Ade_MeTrfase_dom_2"/>
</dbReference>
<dbReference type="InterPro" id="IPR002052">
    <property type="entry name" value="DNA_methylase_N6_adenine_CS"/>
</dbReference>
<dbReference type="InterPro" id="IPR012327">
    <property type="entry name" value="MeTrfase_D12"/>
</dbReference>
<dbReference type="InterPro" id="IPR029063">
    <property type="entry name" value="SAM-dependent_MTases_sf"/>
</dbReference>
<dbReference type="NCBIfam" id="TIGR00571">
    <property type="entry name" value="dam"/>
    <property type="match status" value="1"/>
</dbReference>
<dbReference type="PANTHER" id="PTHR30481">
    <property type="entry name" value="DNA ADENINE METHYLASE"/>
    <property type="match status" value="1"/>
</dbReference>
<dbReference type="PANTHER" id="PTHR30481:SF3">
    <property type="entry name" value="DNA ADENINE METHYLASE"/>
    <property type="match status" value="1"/>
</dbReference>
<dbReference type="Pfam" id="PF02086">
    <property type="entry name" value="MethyltransfD12"/>
    <property type="match status" value="2"/>
</dbReference>
<dbReference type="PIRSF" id="PIRSF036638">
    <property type="entry name" value="M_m6A_StsI"/>
    <property type="match status" value="1"/>
</dbReference>
<dbReference type="PRINTS" id="PR00505">
    <property type="entry name" value="D12N6MTFRASE"/>
</dbReference>
<dbReference type="SUPFAM" id="SSF53335">
    <property type="entry name" value="S-adenosyl-L-methionine-dependent methyltransferases"/>
    <property type="match status" value="2"/>
</dbReference>
<dbReference type="PROSITE" id="PS00092">
    <property type="entry name" value="N6_MTASE"/>
    <property type="match status" value="2"/>
</dbReference>
<feature type="chain" id="PRO_0000087960" description="Type II methyltransferase M.FokI">
    <location>
        <begin position="1"/>
        <end position="647"/>
    </location>
</feature>
<feature type="short sequence motif" description="Adenine-specific methylase 1" evidence="1 9 10">
    <location>
        <begin position="218"/>
        <end position="221"/>
    </location>
</feature>
<feature type="short sequence motif" description="Adenine-specific methylase 2" evidence="1 9 10">
    <location>
        <begin position="548"/>
        <end position="551"/>
    </location>
</feature>
<feature type="mutagenesis site" description="Methylates only 5'-GGATG-3' strand. Loss of methylation; when associated with A-548." evidence="1">
    <original>D</original>
    <variation>G</variation>
    <location>
        <position position="218"/>
    </location>
</feature>
<feature type="mutagenesis site" description="Methylates only 5'-CATCC-3' strand. Loss of methylation; when associated with G-218." evidence="1">
    <original>D</original>
    <variation>A</variation>
    <location>
        <position position="548"/>
    </location>
</feature>
<feature type="sequence conflict" description="In Ref. 2; AAA24933." evidence="7" ref="2">
    <original>G</original>
    <variation>V</variation>
    <location>
        <position position="190"/>
    </location>
</feature>
<comment type="function">
    <text evidence="1 2 4 10">An alpha subtype methylase that recognizes the asymmetric double-stranded sequence 5'-GGATG-3', methylates A-3 of both strands, and protects the DNA from cleavage by the FokI endonuclease.</text>
</comment>
<comment type="catalytic activity">
    <reaction evidence="8 9">
        <text>a 2'-deoxyadenosine in DNA + S-adenosyl-L-methionine = an N(6)-methyl-2'-deoxyadenosine in DNA + S-adenosyl-L-homocysteine + H(+)</text>
        <dbReference type="Rhea" id="RHEA:15197"/>
        <dbReference type="Rhea" id="RHEA-COMP:12418"/>
        <dbReference type="Rhea" id="RHEA-COMP:12419"/>
        <dbReference type="ChEBI" id="CHEBI:15378"/>
        <dbReference type="ChEBI" id="CHEBI:57856"/>
        <dbReference type="ChEBI" id="CHEBI:59789"/>
        <dbReference type="ChEBI" id="CHEBI:90615"/>
        <dbReference type="ChEBI" id="CHEBI:90616"/>
        <dbReference type="EC" id="2.1.1.72"/>
    </reaction>
</comment>
<comment type="subunit">
    <text evidence="3">Monomer.</text>
</comment>
<comment type="domain">
    <text evidence="1 2">The 2 adenine-specific methylase motifs of the protein participate in modification of the two strands; the first motif modifies the sequence 5'-GGATG-3', the second motif modifies the sequence 5'-CATCC-5'.</text>
</comment>
<comment type="similarity">
    <text evidence="7">Belongs to the N(4)/N(6)-methyltransferase family.</text>
</comment>
<gene>
    <name evidence="5" type="primary">fokIM</name>
    <name type="synonym">mfoKI</name>
</gene>
<name>MTF1_PLAOK</name>